<keyword id="KW-1185">Reference proteome</keyword>
<keyword id="KW-0687">Ribonucleoprotein</keyword>
<keyword id="KW-0689">Ribosomal protein</keyword>
<comment type="subunit">
    <text evidence="1">Part of the 50S ribosomal subunit.</text>
</comment>
<comment type="similarity">
    <text evidence="1">Belongs to the universal ribosomal protein uL30 family.</text>
</comment>
<gene>
    <name evidence="1" type="primary">rpmD</name>
    <name type="ordered locus">Amet_4460</name>
</gene>
<feature type="chain" id="PRO_1000087239" description="Large ribosomal subunit protein uL30">
    <location>
        <begin position="1"/>
        <end position="59"/>
    </location>
</feature>
<sequence>MAETIKIKLVKSKIGTLPKQRQNLEALGLKKIGQVVEQKDNPQIRGMIDKVSHLVQVIE</sequence>
<protein>
    <recommendedName>
        <fullName evidence="1">Large ribosomal subunit protein uL30</fullName>
    </recommendedName>
    <alternativeName>
        <fullName evidence="2">50S ribosomal protein L30</fullName>
    </alternativeName>
</protein>
<name>RL30_ALKMQ</name>
<proteinExistence type="inferred from homology"/>
<organism>
    <name type="scientific">Alkaliphilus metalliredigens (strain QYMF)</name>
    <dbReference type="NCBI Taxonomy" id="293826"/>
    <lineage>
        <taxon>Bacteria</taxon>
        <taxon>Bacillati</taxon>
        <taxon>Bacillota</taxon>
        <taxon>Clostridia</taxon>
        <taxon>Peptostreptococcales</taxon>
        <taxon>Natronincolaceae</taxon>
        <taxon>Alkaliphilus</taxon>
    </lineage>
</organism>
<dbReference type="EMBL" id="CP000724">
    <property type="protein sequence ID" value="ABR50532.1"/>
    <property type="molecule type" value="Genomic_DNA"/>
</dbReference>
<dbReference type="RefSeq" id="WP_012065423.1">
    <property type="nucleotide sequence ID" value="NC_009633.1"/>
</dbReference>
<dbReference type="SMR" id="A6TWG4"/>
<dbReference type="STRING" id="293826.Amet_4460"/>
<dbReference type="KEGG" id="amt:Amet_4460"/>
<dbReference type="eggNOG" id="COG1841">
    <property type="taxonomic scope" value="Bacteria"/>
</dbReference>
<dbReference type="HOGENOM" id="CLU_131047_1_3_9"/>
<dbReference type="OrthoDB" id="9812790at2"/>
<dbReference type="Proteomes" id="UP000001572">
    <property type="component" value="Chromosome"/>
</dbReference>
<dbReference type="GO" id="GO:0022625">
    <property type="term" value="C:cytosolic large ribosomal subunit"/>
    <property type="evidence" value="ECO:0007669"/>
    <property type="project" value="TreeGrafter"/>
</dbReference>
<dbReference type="GO" id="GO:0003735">
    <property type="term" value="F:structural constituent of ribosome"/>
    <property type="evidence" value="ECO:0007669"/>
    <property type="project" value="InterPro"/>
</dbReference>
<dbReference type="GO" id="GO:0006412">
    <property type="term" value="P:translation"/>
    <property type="evidence" value="ECO:0007669"/>
    <property type="project" value="UniProtKB-UniRule"/>
</dbReference>
<dbReference type="CDD" id="cd01658">
    <property type="entry name" value="Ribosomal_L30"/>
    <property type="match status" value="1"/>
</dbReference>
<dbReference type="FunFam" id="3.30.1390.20:FF:000001">
    <property type="entry name" value="50S ribosomal protein L30"/>
    <property type="match status" value="1"/>
</dbReference>
<dbReference type="Gene3D" id="3.30.1390.20">
    <property type="entry name" value="Ribosomal protein L30, ferredoxin-like fold domain"/>
    <property type="match status" value="1"/>
</dbReference>
<dbReference type="HAMAP" id="MF_01371_B">
    <property type="entry name" value="Ribosomal_uL30_B"/>
    <property type="match status" value="1"/>
</dbReference>
<dbReference type="InterPro" id="IPR036919">
    <property type="entry name" value="Ribo_uL30_ferredoxin-like_sf"/>
</dbReference>
<dbReference type="InterPro" id="IPR005996">
    <property type="entry name" value="Ribosomal_uL30_bac-type"/>
</dbReference>
<dbReference type="InterPro" id="IPR016082">
    <property type="entry name" value="Ribosomal_uL30_ferredoxin-like"/>
</dbReference>
<dbReference type="NCBIfam" id="TIGR01308">
    <property type="entry name" value="rpmD_bact"/>
    <property type="match status" value="1"/>
</dbReference>
<dbReference type="PANTHER" id="PTHR15892:SF2">
    <property type="entry name" value="LARGE RIBOSOMAL SUBUNIT PROTEIN UL30M"/>
    <property type="match status" value="1"/>
</dbReference>
<dbReference type="PANTHER" id="PTHR15892">
    <property type="entry name" value="MITOCHONDRIAL RIBOSOMAL PROTEIN L30"/>
    <property type="match status" value="1"/>
</dbReference>
<dbReference type="Pfam" id="PF00327">
    <property type="entry name" value="Ribosomal_L30"/>
    <property type="match status" value="1"/>
</dbReference>
<dbReference type="PIRSF" id="PIRSF002211">
    <property type="entry name" value="Ribosomal_L30_bac-type"/>
    <property type="match status" value="1"/>
</dbReference>
<dbReference type="SUPFAM" id="SSF55129">
    <property type="entry name" value="Ribosomal protein L30p/L7e"/>
    <property type="match status" value="1"/>
</dbReference>
<reference key="1">
    <citation type="journal article" date="2016" name="Genome Announc.">
        <title>Complete genome sequence of Alkaliphilus metalliredigens strain QYMF, an alkaliphilic and metal-reducing bacterium isolated from borax-contaminated leachate ponds.</title>
        <authorList>
            <person name="Hwang C."/>
            <person name="Copeland A."/>
            <person name="Lucas S."/>
            <person name="Lapidus A."/>
            <person name="Barry K."/>
            <person name="Detter J.C."/>
            <person name="Glavina Del Rio T."/>
            <person name="Hammon N."/>
            <person name="Israni S."/>
            <person name="Dalin E."/>
            <person name="Tice H."/>
            <person name="Pitluck S."/>
            <person name="Chertkov O."/>
            <person name="Brettin T."/>
            <person name="Bruce D."/>
            <person name="Han C."/>
            <person name="Schmutz J."/>
            <person name="Larimer F."/>
            <person name="Land M.L."/>
            <person name="Hauser L."/>
            <person name="Kyrpides N."/>
            <person name="Mikhailova N."/>
            <person name="Ye Q."/>
            <person name="Zhou J."/>
            <person name="Richardson P."/>
            <person name="Fields M.W."/>
        </authorList>
    </citation>
    <scope>NUCLEOTIDE SEQUENCE [LARGE SCALE GENOMIC DNA]</scope>
    <source>
        <strain>QYMF</strain>
    </source>
</reference>
<evidence type="ECO:0000255" key="1">
    <source>
        <dbReference type="HAMAP-Rule" id="MF_01371"/>
    </source>
</evidence>
<evidence type="ECO:0000305" key="2"/>
<accession>A6TWG4</accession>